<protein>
    <recommendedName>
        <fullName>Capsid protein p24</fullName>
    </recommendedName>
</protein>
<feature type="chain" id="PRO_0000132891" description="Capsid protein p24">
    <location>
        <begin position="1"/>
        <end position="192"/>
    </location>
</feature>
<evidence type="ECO:0000305" key="1"/>
<gene>
    <name type="primary">P24</name>
    <name type="ORF">ORF127</name>
</gene>
<comment type="subcellular location">
    <subcellularLocation>
        <location evidence="1">Virion</location>
    </subcellularLocation>
</comment>
<comment type="miscellaneous">
    <text>Expressed late in infection.</text>
</comment>
<comment type="similarity">
    <text evidence="1">Belongs to the baculoviridae p24 family.</text>
</comment>
<keyword id="KW-0167">Capsid protein</keyword>
<keyword id="KW-0426">Late protein</keyword>
<keyword id="KW-1185">Reference proteome</keyword>
<keyword id="KW-0946">Virion</keyword>
<reference key="1">
    <citation type="journal article" date="1989" name="J. Gen. Virol.">
        <title>Characterization of the genetic organization of the HindIII M region of the multicapsid nuclear polyhedrosis virus of Orgyia pseudotsugata reveals major differences among baculoviruses.</title>
        <authorList>
            <person name="Gombart A.F."/>
            <person name="Blissard G.W."/>
            <person name="Rohrmann G.F."/>
        </authorList>
    </citation>
    <scope>NUCLEOTIDE SEQUENCE [GENOMIC DNA]</scope>
</reference>
<reference key="2">
    <citation type="journal article" date="1997" name="Virology">
        <title>The sequence of the Orgyia pseudotsugata multinucleocapsid nuclear polyhedrosis virus genome.</title>
        <authorList>
            <person name="Ahrens C.H."/>
            <person name="Russell R.R."/>
            <person name="Funk C.J."/>
            <person name="Evans J."/>
            <person name="Harwood S."/>
            <person name="Rohrmann G.F."/>
        </authorList>
    </citation>
    <scope>NUCLEOTIDE SEQUENCE [LARGE SCALE GENOMIC DNA]</scope>
</reference>
<dbReference type="EMBL" id="D13796">
    <property type="protein sequence ID" value="BAA02949.1"/>
    <property type="molecule type" value="Genomic_DNA"/>
</dbReference>
<dbReference type="EMBL" id="D13929">
    <property type="protein sequence ID" value="BAA03027.1"/>
    <property type="molecule type" value="Genomic_DNA"/>
</dbReference>
<dbReference type="EMBL" id="U75930">
    <property type="protein sequence ID" value="AAC59126.1"/>
    <property type="molecule type" value="Genomic_DNA"/>
</dbReference>
<dbReference type="PIR" id="A30857">
    <property type="entry name" value="A30857"/>
</dbReference>
<dbReference type="RefSeq" id="NP_046283.1">
    <property type="nucleotide sequence ID" value="NC_001875.2"/>
</dbReference>
<dbReference type="KEGG" id="vg:912085"/>
<dbReference type="OrthoDB" id="18599at10239"/>
<dbReference type="Proteomes" id="UP000009248">
    <property type="component" value="Genome"/>
</dbReference>
<dbReference type="GO" id="GO:0019028">
    <property type="term" value="C:viral capsid"/>
    <property type="evidence" value="ECO:0007669"/>
    <property type="project" value="UniProtKB-KW"/>
</dbReference>
<dbReference type="InterPro" id="IPR007765">
    <property type="entry name" value="Baculo_p24"/>
</dbReference>
<dbReference type="Pfam" id="PF05073">
    <property type="entry name" value="Baculo_p24"/>
    <property type="match status" value="1"/>
</dbReference>
<proteinExistence type="inferred from homology"/>
<organismHost>
    <name type="scientific">Orgyia pseudotsugata</name>
    <name type="common">Douglas-fir tussock moth</name>
    <dbReference type="NCBI Taxonomy" id="33414"/>
</organismHost>
<accession>P24078</accession>
<organism>
    <name type="scientific">Orgyia pseudotsugata multicapsid polyhedrosis virus</name>
    <name type="common">OpMNPV</name>
    <dbReference type="NCBI Taxonomy" id="262177"/>
    <lineage>
        <taxon>Viruses</taxon>
        <taxon>Viruses incertae sedis</taxon>
        <taxon>Naldaviricetes</taxon>
        <taxon>Lefavirales</taxon>
        <taxon>Baculoviridae</taxon>
        <taxon>Alphabaculovirus</taxon>
        <taxon>Alphabaculovirus orpseudotsugatae</taxon>
    </lineage>
</organism>
<sequence length="192" mass="21158">MANADSLDARAFSYAPDASFEVIIITNAPNDHDGYLELNAAARLLAPFQKNISALWTSAAPSHKLVRNNKNYLHVFGLFKYLQNYNFNAKPHPPEYYTVKSVICDLIAGAQGKTFDPLCEIKTQLCAIQESLNEAIVTLNSHATAEPAPGAPCDARELVETLHSEYSQKLTFATDTILDNVKSIKDLVCLNK</sequence>
<name>VP24_NPVOP</name>